<evidence type="ECO:0000255" key="1">
    <source>
        <dbReference type="HAMAP-Rule" id="MF_01631"/>
    </source>
</evidence>
<keyword id="KW-0012">Acyltransferase</keyword>
<keyword id="KW-0133">Cell shape</keyword>
<keyword id="KW-0961">Cell wall biogenesis/degradation</keyword>
<keyword id="KW-0963">Cytoplasm</keyword>
<keyword id="KW-0460">Magnesium</keyword>
<keyword id="KW-0479">Metal-binding</keyword>
<keyword id="KW-0511">Multifunctional enzyme</keyword>
<keyword id="KW-0548">Nucleotidyltransferase</keyword>
<keyword id="KW-0573">Peptidoglycan synthesis</keyword>
<keyword id="KW-0677">Repeat</keyword>
<keyword id="KW-0808">Transferase</keyword>
<reference key="1">
    <citation type="submission" date="2006-04" db="EMBL/GenBank/DDBJ databases">
        <title>Complete sequence of chromosome of Deinococcus geothermalis DSM 11300.</title>
        <authorList>
            <person name="Copeland A."/>
            <person name="Lucas S."/>
            <person name="Lapidus A."/>
            <person name="Barry K."/>
            <person name="Detter J.C."/>
            <person name="Glavina del Rio T."/>
            <person name="Hammon N."/>
            <person name="Israni S."/>
            <person name="Dalin E."/>
            <person name="Tice H."/>
            <person name="Pitluck S."/>
            <person name="Brettin T."/>
            <person name="Bruce D."/>
            <person name="Han C."/>
            <person name="Tapia R."/>
            <person name="Saunders E."/>
            <person name="Gilna P."/>
            <person name="Schmutz J."/>
            <person name="Larimer F."/>
            <person name="Land M."/>
            <person name="Hauser L."/>
            <person name="Kyrpides N."/>
            <person name="Kim E."/>
            <person name="Daly M.J."/>
            <person name="Fredrickson J.K."/>
            <person name="Makarova K.S."/>
            <person name="Gaidamakova E.K."/>
            <person name="Zhai M."/>
            <person name="Richardson P."/>
        </authorList>
    </citation>
    <scope>NUCLEOTIDE SEQUENCE [LARGE SCALE GENOMIC DNA]</scope>
    <source>
        <strain>DSM 11300 / CIP 105573 / AG-3a</strain>
    </source>
</reference>
<protein>
    <recommendedName>
        <fullName evidence="1">Bifunctional protein GlmU</fullName>
    </recommendedName>
    <domain>
        <recommendedName>
            <fullName evidence="1">UDP-N-acetylglucosamine pyrophosphorylase</fullName>
            <ecNumber evidence="1">2.7.7.23</ecNumber>
        </recommendedName>
        <alternativeName>
            <fullName evidence="1">N-acetylglucosamine-1-phosphate uridyltransferase</fullName>
        </alternativeName>
    </domain>
    <domain>
        <recommendedName>
            <fullName evidence="1">Glucosamine-1-phosphate N-acetyltransferase</fullName>
            <ecNumber evidence="1">2.3.1.157</ecNumber>
        </recommendedName>
    </domain>
</protein>
<feature type="chain" id="PRO_0000263126" description="Bifunctional protein GlmU">
    <location>
        <begin position="1"/>
        <end position="481"/>
    </location>
</feature>
<feature type="region of interest" description="Pyrophosphorylase" evidence="1">
    <location>
        <begin position="1"/>
        <end position="235"/>
    </location>
</feature>
<feature type="region of interest" description="Linker" evidence="1">
    <location>
        <begin position="236"/>
        <end position="256"/>
    </location>
</feature>
<feature type="region of interest" description="N-acetyltransferase" evidence="1">
    <location>
        <begin position="257"/>
        <end position="481"/>
    </location>
</feature>
<feature type="active site" description="Proton acceptor" evidence="1">
    <location>
        <position position="369"/>
    </location>
</feature>
<feature type="binding site" evidence="1">
    <location>
        <begin position="13"/>
        <end position="16"/>
    </location>
    <ligand>
        <name>UDP-N-acetyl-alpha-D-glucosamine</name>
        <dbReference type="ChEBI" id="CHEBI:57705"/>
    </ligand>
</feature>
<feature type="binding site" evidence="1">
    <location>
        <position position="27"/>
    </location>
    <ligand>
        <name>UDP-N-acetyl-alpha-D-glucosamine</name>
        <dbReference type="ChEBI" id="CHEBI:57705"/>
    </ligand>
</feature>
<feature type="binding site" evidence="1">
    <location>
        <position position="78"/>
    </location>
    <ligand>
        <name>UDP-N-acetyl-alpha-D-glucosamine</name>
        <dbReference type="ChEBI" id="CHEBI:57705"/>
    </ligand>
</feature>
<feature type="binding site" evidence="1">
    <location>
        <begin position="83"/>
        <end position="84"/>
    </location>
    <ligand>
        <name>UDP-N-acetyl-alpha-D-glucosamine</name>
        <dbReference type="ChEBI" id="CHEBI:57705"/>
    </ligand>
</feature>
<feature type="binding site" evidence="1">
    <location>
        <begin position="107"/>
        <end position="109"/>
    </location>
    <ligand>
        <name>UDP-N-acetyl-alpha-D-glucosamine</name>
        <dbReference type="ChEBI" id="CHEBI:57705"/>
    </ligand>
</feature>
<feature type="binding site" evidence="1">
    <location>
        <position position="109"/>
    </location>
    <ligand>
        <name>Mg(2+)</name>
        <dbReference type="ChEBI" id="CHEBI:18420"/>
    </ligand>
</feature>
<feature type="binding site" evidence="1">
    <location>
        <position position="146"/>
    </location>
    <ligand>
        <name>UDP-N-acetyl-alpha-D-glucosamine</name>
        <dbReference type="ChEBI" id="CHEBI:57705"/>
    </ligand>
</feature>
<feature type="binding site" evidence="1">
    <location>
        <position position="161"/>
    </location>
    <ligand>
        <name>UDP-N-acetyl-alpha-D-glucosamine</name>
        <dbReference type="ChEBI" id="CHEBI:57705"/>
    </ligand>
</feature>
<feature type="binding site" evidence="1">
    <location>
        <position position="176"/>
    </location>
    <ligand>
        <name>UDP-N-acetyl-alpha-D-glucosamine</name>
        <dbReference type="ChEBI" id="CHEBI:57705"/>
    </ligand>
</feature>
<feature type="binding site" evidence="1">
    <location>
        <position position="233"/>
    </location>
    <ligand>
        <name>Mg(2+)</name>
        <dbReference type="ChEBI" id="CHEBI:18420"/>
    </ligand>
</feature>
<feature type="binding site" evidence="1">
    <location>
        <position position="233"/>
    </location>
    <ligand>
        <name>UDP-N-acetyl-alpha-D-glucosamine</name>
        <dbReference type="ChEBI" id="CHEBI:57705"/>
    </ligand>
</feature>
<feature type="binding site" evidence="1">
    <location>
        <position position="339"/>
    </location>
    <ligand>
        <name>UDP-N-acetyl-alpha-D-glucosamine</name>
        <dbReference type="ChEBI" id="CHEBI:57705"/>
    </ligand>
</feature>
<feature type="binding site" evidence="1">
    <location>
        <position position="357"/>
    </location>
    <ligand>
        <name>UDP-N-acetyl-alpha-D-glucosamine</name>
        <dbReference type="ChEBI" id="CHEBI:57705"/>
    </ligand>
</feature>
<feature type="binding site" evidence="1">
    <location>
        <position position="372"/>
    </location>
    <ligand>
        <name>UDP-N-acetyl-alpha-D-glucosamine</name>
        <dbReference type="ChEBI" id="CHEBI:57705"/>
    </ligand>
</feature>
<feature type="binding site" evidence="1">
    <location>
        <position position="383"/>
    </location>
    <ligand>
        <name>UDP-N-acetyl-alpha-D-glucosamine</name>
        <dbReference type="ChEBI" id="CHEBI:57705"/>
    </ligand>
</feature>
<feature type="binding site" evidence="1">
    <location>
        <position position="386"/>
    </location>
    <ligand>
        <name>acetyl-CoA</name>
        <dbReference type="ChEBI" id="CHEBI:57288"/>
    </ligand>
</feature>
<feature type="binding site" evidence="1">
    <location>
        <position position="411"/>
    </location>
    <ligand>
        <name>acetyl-CoA</name>
        <dbReference type="ChEBI" id="CHEBI:57288"/>
    </ligand>
</feature>
<feature type="binding site" evidence="1">
    <location>
        <position position="429"/>
    </location>
    <ligand>
        <name>acetyl-CoA</name>
        <dbReference type="ChEBI" id="CHEBI:57288"/>
    </ligand>
</feature>
<feature type="binding site" evidence="1">
    <location>
        <position position="446"/>
    </location>
    <ligand>
        <name>acetyl-CoA</name>
        <dbReference type="ChEBI" id="CHEBI:57288"/>
    </ligand>
</feature>
<comment type="function">
    <text evidence="1">Catalyzes the last two sequential reactions in the de novo biosynthetic pathway for UDP-N-acetylglucosamine (UDP-GlcNAc). The C-terminal domain catalyzes the transfer of acetyl group from acetyl coenzyme A to glucosamine-1-phosphate (GlcN-1-P) to produce N-acetylglucosamine-1-phosphate (GlcNAc-1-P), which is converted into UDP-GlcNAc by the transfer of uridine 5-monophosphate (from uridine 5-triphosphate), a reaction catalyzed by the N-terminal domain.</text>
</comment>
<comment type="catalytic activity">
    <reaction evidence="1">
        <text>alpha-D-glucosamine 1-phosphate + acetyl-CoA = N-acetyl-alpha-D-glucosamine 1-phosphate + CoA + H(+)</text>
        <dbReference type="Rhea" id="RHEA:13725"/>
        <dbReference type="ChEBI" id="CHEBI:15378"/>
        <dbReference type="ChEBI" id="CHEBI:57287"/>
        <dbReference type="ChEBI" id="CHEBI:57288"/>
        <dbReference type="ChEBI" id="CHEBI:57776"/>
        <dbReference type="ChEBI" id="CHEBI:58516"/>
        <dbReference type="EC" id="2.3.1.157"/>
    </reaction>
</comment>
<comment type="catalytic activity">
    <reaction evidence="1">
        <text>N-acetyl-alpha-D-glucosamine 1-phosphate + UTP + H(+) = UDP-N-acetyl-alpha-D-glucosamine + diphosphate</text>
        <dbReference type="Rhea" id="RHEA:13509"/>
        <dbReference type="ChEBI" id="CHEBI:15378"/>
        <dbReference type="ChEBI" id="CHEBI:33019"/>
        <dbReference type="ChEBI" id="CHEBI:46398"/>
        <dbReference type="ChEBI" id="CHEBI:57705"/>
        <dbReference type="ChEBI" id="CHEBI:57776"/>
        <dbReference type="EC" id="2.7.7.23"/>
    </reaction>
</comment>
<comment type="cofactor">
    <cofactor evidence="1">
        <name>Mg(2+)</name>
        <dbReference type="ChEBI" id="CHEBI:18420"/>
    </cofactor>
    <text evidence="1">Binds 1 Mg(2+) ion per subunit.</text>
</comment>
<comment type="pathway">
    <text evidence="1">Nucleotide-sugar biosynthesis; UDP-N-acetyl-alpha-D-glucosamine biosynthesis; N-acetyl-alpha-D-glucosamine 1-phosphate from alpha-D-glucosamine 6-phosphate (route II): step 2/2.</text>
</comment>
<comment type="pathway">
    <text evidence="1">Nucleotide-sugar biosynthesis; UDP-N-acetyl-alpha-D-glucosamine biosynthesis; UDP-N-acetyl-alpha-D-glucosamine from N-acetyl-alpha-D-glucosamine 1-phosphate: step 1/1.</text>
</comment>
<comment type="pathway">
    <text evidence="1">Bacterial outer membrane biogenesis; LPS lipid A biosynthesis.</text>
</comment>
<comment type="subunit">
    <text evidence="1">Homotrimer.</text>
</comment>
<comment type="subcellular location">
    <subcellularLocation>
        <location evidence="1">Cytoplasm</location>
    </subcellularLocation>
</comment>
<comment type="similarity">
    <text evidence="1">In the N-terminal section; belongs to the N-acetylglucosamine-1-phosphate uridyltransferase family.</text>
</comment>
<comment type="similarity">
    <text evidence="1">In the C-terminal section; belongs to the transferase hexapeptide repeat family.</text>
</comment>
<accession>Q1IWX3</accession>
<dbReference type="EC" id="2.7.7.23" evidence="1"/>
<dbReference type="EC" id="2.3.1.157" evidence="1"/>
<dbReference type="EMBL" id="CP000359">
    <property type="protein sequence ID" value="ABF46261.1"/>
    <property type="molecule type" value="Genomic_DNA"/>
</dbReference>
<dbReference type="RefSeq" id="WP_011531088.1">
    <property type="nucleotide sequence ID" value="NC_008025.1"/>
</dbReference>
<dbReference type="SMR" id="Q1IWX3"/>
<dbReference type="STRING" id="319795.Dgeo_1967"/>
<dbReference type="KEGG" id="dge:Dgeo_1967"/>
<dbReference type="eggNOG" id="COG1207">
    <property type="taxonomic scope" value="Bacteria"/>
</dbReference>
<dbReference type="HOGENOM" id="CLU_029499_15_2_0"/>
<dbReference type="UniPathway" id="UPA00113">
    <property type="reaction ID" value="UER00532"/>
</dbReference>
<dbReference type="UniPathway" id="UPA00113">
    <property type="reaction ID" value="UER00533"/>
</dbReference>
<dbReference type="UniPathway" id="UPA00973"/>
<dbReference type="Proteomes" id="UP000002431">
    <property type="component" value="Chromosome"/>
</dbReference>
<dbReference type="GO" id="GO:0005737">
    <property type="term" value="C:cytoplasm"/>
    <property type="evidence" value="ECO:0007669"/>
    <property type="project" value="UniProtKB-SubCell"/>
</dbReference>
<dbReference type="GO" id="GO:0016020">
    <property type="term" value="C:membrane"/>
    <property type="evidence" value="ECO:0007669"/>
    <property type="project" value="GOC"/>
</dbReference>
<dbReference type="GO" id="GO:0019134">
    <property type="term" value="F:glucosamine-1-phosphate N-acetyltransferase activity"/>
    <property type="evidence" value="ECO:0007669"/>
    <property type="project" value="UniProtKB-UniRule"/>
</dbReference>
<dbReference type="GO" id="GO:0000287">
    <property type="term" value="F:magnesium ion binding"/>
    <property type="evidence" value="ECO:0007669"/>
    <property type="project" value="UniProtKB-UniRule"/>
</dbReference>
<dbReference type="GO" id="GO:0003977">
    <property type="term" value="F:UDP-N-acetylglucosamine diphosphorylase activity"/>
    <property type="evidence" value="ECO:0007669"/>
    <property type="project" value="UniProtKB-UniRule"/>
</dbReference>
<dbReference type="GO" id="GO:0000902">
    <property type="term" value="P:cell morphogenesis"/>
    <property type="evidence" value="ECO:0007669"/>
    <property type="project" value="UniProtKB-UniRule"/>
</dbReference>
<dbReference type="GO" id="GO:0071555">
    <property type="term" value="P:cell wall organization"/>
    <property type="evidence" value="ECO:0007669"/>
    <property type="project" value="UniProtKB-KW"/>
</dbReference>
<dbReference type="GO" id="GO:0009245">
    <property type="term" value="P:lipid A biosynthetic process"/>
    <property type="evidence" value="ECO:0007669"/>
    <property type="project" value="UniProtKB-UniRule"/>
</dbReference>
<dbReference type="GO" id="GO:0009252">
    <property type="term" value="P:peptidoglycan biosynthetic process"/>
    <property type="evidence" value="ECO:0007669"/>
    <property type="project" value="UniProtKB-UniRule"/>
</dbReference>
<dbReference type="GO" id="GO:0008360">
    <property type="term" value="P:regulation of cell shape"/>
    <property type="evidence" value="ECO:0007669"/>
    <property type="project" value="UniProtKB-KW"/>
</dbReference>
<dbReference type="GO" id="GO:0006048">
    <property type="term" value="P:UDP-N-acetylglucosamine biosynthetic process"/>
    <property type="evidence" value="ECO:0007669"/>
    <property type="project" value="UniProtKB-UniPathway"/>
</dbReference>
<dbReference type="CDD" id="cd02540">
    <property type="entry name" value="GT2_GlmU_N_bac"/>
    <property type="match status" value="1"/>
</dbReference>
<dbReference type="CDD" id="cd03353">
    <property type="entry name" value="LbH_GlmU_C"/>
    <property type="match status" value="1"/>
</dbReference>
<dbReference type="Gene3D" id="2.160.10.10">
    <property type="entry name" value="Hexapeptide repeat proteins"/>
    <property type="match status" value="1"/>
</dbReference>
<dbReference type="Gene3D" id="3.90.550.10">
    <property type="entry name" value="Spore Coat Polysaccharide Biosynthesis Protein SpsA, Chain A"/>
    <property type="match status" value="1"/>
</dbReference>
<dbReference type="HAMAP" id="MF_01631">
    <property type="entry name" value="GlmU"/>
    <property type="match status" value="1"/>
</dbReference>
<dbReference type="InterPro" id="IPR005882">
    <property type="entry name" value="Bifunctional_GlmU"/>
</dbReference>
<dbReference type="InterPro" id="IPR050065">
    <property type="entry name" value="GlmU-like"/>
</dbReference>
<dbReference type="InterPro" id="IPR038009">
    <property type="entry name" value="GlmU_C_LbH"/>
</dbReference>
<dbReference type="InterPro" id="IPR025877">
    <property type="entry name" value="MobA-like_NTP_Trfase"/>
</dbReference>
<dbReference type="InterPro" id="IPR029044">
    <property type="entry name" value="Nucleotide-diphossugar_trans"/>
</dbReference>
<dbReference type="InterPro" id="IPR011004">
    <property type="entry name" value="Trimer_LpxA-like_sf"/>
</dbReference>
<dbReference type="NCBIfam" id="TIGR01173">
    <property type="entry name" value="glmU"/>
    <property type="match status" value="1"/>
</dbReference>
<dbReference type="NCBIfam" id="NF010938">
    <property type="entry name" value="PRK14358.1"/>
    <property type="match status" value="1"/>
</dbReference>
<dbReference type="PANTHER" id="PTHR43584:SF3">
    <property type="entry name" value="BIFUNCTIONAL PROTEIN GLMU"/>
    <property type="match status" value="1"/>
</dbReference>
<dbReference type="PANTHER" id="PTHR43584">
    <property type="entry name" value="NUCLEOTIDYL TRANSFERASE"/>
    <property type="match status" value="1"/>
</dbReference>
<dbReference type="Pfam" id="PF12804">
    <property type="entry name" value="NTP_transf_3"/>
    <property type="match status" value="1"/>
</dbReference>
<dbReference type="SUPFAM" id="SSF53448">
    <property type="entry name" value="Nucleotide-diphospho-sugar transferases"/>
    <property type="match status" value="1"/>
</dbReference>
<dbReference type="SUPFAM" id="SSF51161">
    <property type="entry name" value="Trimeric LpxA-like enzymes"/>
    <property type="match status" value="1"/>
</dbReference>
<sequence length="481" mass="51269">MTHKERPLDVVILAAGQGTRMKSALPKVLHPVAGRPMVAWAVKAAKALGARDIVVVTGHGAEQVEAALAGSGVRFARQAQQLGTGNAFLVGAEALRHQGDADILVLYGDTPLLRPETLRALLADHRAHNSALTILTAELPDATGYGRILRDADGHVERIVEEKAATPEEKAVREFNSGVYVLDARAPELARRITNDNPAGEYYLTDLLELYRQEGAQVRAFKLHDPDEVMGANDRVQLAQAAAVLRRRINTAHMQAGVTLQDPSTIQIEDTVTLGRDVTLEPGVILRGQTRVADGVTIGAYSVVTDSVLEEGVIVKPHSVLEGAHVGKGSDVGPFARLRPGTVLEESVHIGNFVETKNARLAEGVKAGHLAYLGDVTIGAETNVGAGTIIANFDGVHKHQSTVGAGVFIGSNATLIAPRVIGDAAFIAAGSAVHADVPEGALAIARGKQRTLEGWSRRYWSGMHEGVRKKLPWLAGWLERQ</sequence>
<organism>
    <name type="scientific">Deinococcus geothermalis (strain DSM 11300 / CIP 105573 / AG-3a)</name>
    <dbReference type="NCBI Taxonomy" id="319795"/>
    <lineage>
        <taxon>Bacteria</taxon>
        <taxon>Thermotogati</taxon>
        <taxon>Deinococcota</taxon>
        <taxon>Deinococci</taxon>
        <taxon>Deinococcales</taxon>
        <taxon>Deinococcaceae</taxon>
        <taxon>Deinococcus</taxon>
    </lineage>
</organism>
<name>GLMU_DEIGD</name>
<gene>
    <name evidence="1" type="primary">glmU</name>
    <name type="ordered locus">Dgeo_1967</name>
</gene>
<proteinExistence type="inferred from homology"/>